<gene>
    <name evidence="1" type="primary">miaA</name>
    <name type="ordered locus">BSUIS_A1441</name>
</gene>
<organism>
    <name type="scientific">Brucella suis (strain ATCC 23445 / NCTC 10510)</name>
    <dbReference type="NCBI Taxonomy" id="470137"/>
    <lineage>
        <taxon>Bacteria</taxon>
        <taxon>Pseudomonadati</taxon>
        <taxon>Pseudomonadota</taxon>
        <taxon>Alphaproteobacteria</taxon>
        <taxon>Hyphomicrobiales</taxon>
        <taxon>Brucellaceae</taxon>
        <taxon>Brucella/Ochrobactrum group</taxon>
        <taxon>Brucella</taxon>
    </lineage>
</organism>
<protein>
    <recommendedName>
        <fullName evidence="1">tRNA dimethylallyltransferase</fullName>
        <ecNumber evidence="1">2.5.1.75</ecNumber>
    </recommendedName>
    <alternativeName>
        <fullName evidence="1">Dimethylallyl diphosphate:tRNA dimethylallyltransferase</fullName>
        <shortName evidence="1">DMAPP:tRNA dimethylallyltransferase</shortName>
        <shortName evidence="1">DMATase</shortName>
    </alternativeName>
    <alternativeName>
        <fullName evidence="1">Isopentenyl-diphosphate:tRNA isopentenyltransferase</fullName>
        <shortName evidence="1">IPP transferase</shortName>
        <shortName evidence="1">IPPT</shortName>
        <shortName evidence="1">IPTase</shortName>
    </alternativeName>
</protein>
<comment type="function">
    <text evidence="1">Catalyzes the transfer of a dimethylallyl group onto the adenine at position 37 in tRNAs that read codons beginning with uridine, leading to the formation of N6-(dimethylallyl)adenosine (i(6)A).</text>
</comment>
<comment type="catalytic activity">
    <reaction evidence="1">
        <text>adenosine(37) in tRNA + dimethylallyl diphosphate = N(6)-dimethylallyladenosine(37) in tRNA + diphosphate</text>
        <dbReference type="Rhea" id="RHEA:26482"/>
        <dbReference type="Rhea" id="RHEA-COMP:10162"/>
        <dbReference type="Rhea" id="RHEA-COMP:10375"/>
        <dbReference type="ChEBI" id="CHEBI:33019"/>
        <dbReference type="ChEBI" id="CHEBI:57623"/>
        <dbReference type="ChEBI" id="CHEBI:74411"/>
        <dbReference type="ChEBI" id="CHEBI:74415"/>
        <dbReference type="EC" id="2.5.1.75"/>
    </reaction>
</comment>
<comment type="cofactor">
    <cofactor evidence="1">
        <name>Mg(2+)</name>
        <dbReference type="ChEBI" id="CHEBI:18420"/>
    </cofactor>
</comment>
<comment type="subunit">
    <text evidence="1">Monomer.</text>
</comment>
<comment type="similarity">
    <text evidence="1">Belongs to the IPP transferase family.</text>
</comment>
<evidence type="ECO:0000255" key="1">
    <source>
        <dbReference type="HAMAP-Rule" id="MF_00185"/>
    </source>
</evidence>
<sequence>MSEDAVKNAILIAGPTASGKSALAIRMAKATGGFIVNTDSMQVYGVLDLLTARPSRADLAEAEHFLYGHVPPSSTYSTGKWFEDVEALLGRCELQGRVPIFVGGTGLYFRALLGGLSQMPEVSAQVRDHWRGRMEAEGAKALHAVLCVRDPAIAAALQPSDSQRIVRALEVLESTGKSLLEWQKVKGRALVDDQSAQKIVLRPDRAWLGERIARRFSAMWAEGAIDEVRALLALDLDPALPAMKAIGVREVSAFLAETMSREEAIERSVIATRQYAKRQSTWFRNQLGEDWRVYASGEEVFQGGSFRDPQ</sequence>
<keyword id="KW-0067">ATP-binding</keyword>
<keyword id="KW-0460">Magnesium</keyword>
<keyword id="KW-0547">Nucleotide-binding</keyword>
<keyword id="KW-0808">Transferase</keyword>
<keyword id="KW-0819">tRNA processing</keyword>
<reference key="1">
    <citation type="submission" date="2007-12" db="EMBL/GenBank/DDBJ databases">
        <title>Brucella suis ATCC 23445 whole genome shotgun sequencing project.</title>
        <authorList>
            <person name="Setubal J.C."/>
            <person name="Bowns C."/>
            <person name="Boyle S."/>
            <person name="Crasta O.R."/>
            <person name="Czar M.J."/>
            <person name="Dharmanolla C."/>
            <person name="Gillespie J.J."/>
            <person name="Kenyon R.W."/>
            <person name="Lu J."/>
            <person name="Mane S."/>
            <person name="Mohapatra S."/>
            <person name="Nagrani S."/>
            <person name="Purkayastha A."/>
            <person name="Rajasimha H.K."/>
            <person name="Shallom J.M."/>
            <person name="Shallom S."/>
            <person name="Shukla M."/>
            <person name="Snyder E.E."/>
            <person name="Sobral B.W."/>
            <person name="Wattam A.R."/>
            <person name="Will R."/>
            <person name="Williams K."/>
            <person name="Yoo H."/>
            <person name="Bruce D."/>
            <person name="Detter C."/>
            <person name="Munk C."/>
            <person name="Brettin T.S."/>
        </authorList>
    </citation>
    <scope>NUCLEOTIDE SEQUENCE [LARGE SCALE GENOMIC DNA]</scope>
    <source>
        <strain>ATCC 23445 / NCTC 10510</strain>
    </source>
</reference>
<proteinExistence type="inferred from homology"/>
<name>MIAA_BRUSI</name>
<dbReference type="EC" id="2.5.1.75" evidence="1"/>
<dbReference type="EMBL" id="CP000911">
    <property type="protein sequence ID" value="ABY38479.1"/>
    <property type="molecule type" value="Genomic_DNA"/>
</dbReference>
<dbReference type="RefSeq" id="WP_004688534.1">
    <property type="nucleotide sequence ID" value="NC_010169.1"/>
</dbReference>
<dbReference type="SMR" id="B0CHH8"/>
<dbReference type="GeneID" id="97533398"/>
<dbReference type="KEGG" id="bmt:BSUIS_A1441"/>
<dbReference type="HOGENOM" id="CLU_032616_0_1_5"/>
<dbReference type="PRO" id="PR:B0CHH8"/>
<dbReference type="Proteomes" id="UP000008545">
    <property type="component" value="Chromosome I"/>
</dbReference>
<dbReference type="GO" id="GO:0005524">
    <property type="term" value="F:ATP binding"/>
    <property type="evidence" value="ECO:0007669"/>
    <property type="project" value="UniProtKB-UniRule"/>
</dbReference>
<dbReference type="GO" id="GO:0052381">
    <property type="term" value="F:tRNA dimethylallyltransferase activity"/>
    <property type="evidence" value="ECO:0007669"/>
    <property type="project" value="UniProtKB-UniRule"/>
</dbReference>
<dbReference type="GO" id="GO:0006400">
    <property type="term" value="P:tRNA modification"/>
    <property type="evidence" value="ECO:0007669"/>
    <property type="project" value="TreeGrafter"/>
</dbReference>
<dbReference type="Gene3D" id="1.10.20.140">
    <property type="match status" value="1"/>
</dbReference>
<dbReference type="Gene3D" id="3.40.50.300">
    <property type="entry name" value="P-loop containing nucleotide triphosphate hydrolases"/>
    <property type="match status" value="1"/>
</dbReference>
<dbReference type="HAMAP" id="MF_00185">
    <property type="entry name" value="IPP_trans"/>
    <property type="match status" value="1"/>
</dbReference>
<dbReference type="InterPro" id="IPR039657">
    <property type="entry name" value="Dimethylallyltransferase"/>
</dbReference>
<dbReference type="InterPro" id="IPR018022">
    <property type="entry name" value="IPT"/>
</dbReference>
<dbReference type="InterPro" id="IPR027417">
    <property type="entry name" value="P-loop_NTPase"/>
</dbReference>
<dbReference type="NCBIfam" id="TIGR00174">
    <property type="entry name" value="miaA"/>
    <property type="match status" value="1"/>
</dbReference>
<dbReference type="PANTHER" id="PTHR11088">
    <property type="entry name" value="TRNA DIMETHYLALLYLTRANSFERASE"/>
    <property type="match status" value="1"/>
</dbReference>
<dbReference type="PANTHER" id="PTHR11088:SF60">
    <property type="entry name" value="TRNA DIMETHYLALLYLTRANSFERASE"/>
    <property type="match status" value="1"/>
</dbReference>
<dbReference type="Pfam" id="PF01715">
    <property type="entry name" value="IPPT"/>
    <property type="match status" value="1"/>
</dbReference>
<dbReference type="SUPFAM" id="SSF52540">
    <property type="entry name" value="P-loop containing nucleoside triphosphate hydrolases"/>
    <property type="match status" value="2"/>
</dbReference>
<accession>B0CHH8</accession>
<feature type="chain" id="PRO_1000077388" description="tRNA dimethylallyltransferase">
    <location>
        <begin position="1"/>
        <end position="310"/>
    </location>
</feature>
<feature type="region of interest" description="Interaction with substrate tRNA" evidence="1">
    <location>
        <begin position="39"/>
        <end position="42"/>
    </location>
</feature>
<feature type="region of interest" description="Interaction with substrate tRNA" evidence="1">
    <location>
        <begin position="163"/>
        <end position="167"/>
    </location>
</feature>
<feature type="binding site" evidence="1">
    <location>
        <begin position="14"/>
        <end position="21"/>
    </location>
    <ligand>
        <name>ATP</name>
        <dbReference type="ChEBI" id="CHEBI:30616"/>
    </ligand>
</feature>
<feature type="binding site" evidence="1">
    <location>
        <begin position="16"/>
        <end position="21"/>
    </location>
    <ligand>
        <name>substrate</name>
    </ligand>
</feature>
<feature type="site" description="Interaction with substrate tRNA" evidence="1">
    <location>
        <position position="105"/>
    </location>
</feature>
<feature type="site" description="Interaction with substrate tRNA" evidence="1">
    <location>
        <position position="127"/>
    </location>
</feature>